<reference key="1">
    <citation type="journal article" date="2003" name="Nat. Genet.">
        <title>Comparative analysis of the genome sequences of Bordetella pertussis, Bordetella parapertussis and Bordetella bronchiseptica.</title>
        <authorList>
            <person name="Parkhill J."/>
            <person name="Sebaihia M."/>
            <person name="Preston A."/>
            <person name="Murphy L.D."/>
            <person name="Thomson N.R."/>
            <person name="Harris D.E."/>
            <person name="Holden M.T.G."/>
            <person name="Churcher C.M."/>
            <person name="Bentley S.D."/>
            <person name="Mungall K.L."/>
            <person name="Cerdeno-Tarraga A.-M."/>
            <person name="Temple L."/>
            <person name="James K.D."/>
            <person name="Harris B."/>
            <person name="Quail M.A."/>
            <person name="Achtman M."/>
            <person name="Atkin R."/>
            <person name="Baker S."/>
            <person name="Basham D."/>
            <person name="Bason N."/>
            <person name="Cherevach I."/>
            <person name="Chillingworth T."/>
            <person name="Collins M."/>
            <person name="Cronin A."/>
            <person name="Davis P."/>
            <person name="Doggett J."/>
            <person name="Feltwell T."/>
            <person name="Goble A."/>
            <person name="Hamlin N."/>
            <person name="Hauser H."/>
            <person name="Holroyd S."/>
            <person name="Jagels K."/>
            <person name="Leather S."/>
            <person name="Moule S."/>
            <person name="Norberczak H."/>
            <person name="O'Neil S."/>
            <person name="Ormond D."/>
            <person name="Price C."/>
            <person name="Rabbinowitsch E."/>
            <person name="Rutter S."/>
            <person name="Sanders M."/>
            <person name="Saunders D."/>
            <person name="Seeger K."/>
            <person name="Sharp S."/>
            <person name="Simmonds M."/>
            <person name="Skelton J."/>
            <person name="Squares R."/>
            <person name="Squares S."/>
            <person name="Stevens K."/>
            <person name="Unwin L."/>
            <person name="Whitehead S."/>
            <person name="Barrell B.G."/>
            <person name="Maskell D.J."/>
        </authorList>
    </citation>
    <scope>NUCLEOTIDE SEQUENCE [LARGE SCALE GENOMIC DNA]</scope>
    <source>
        <strain>Tohama I / ATCC BAA-589 / NCTC 13251</strain>
    </source>
</reference>
<protein>
    <recommendedName>
        <fullName evidence="1">Oxygen-dependent coproporphyrinogen-III oxidase</fullName>
        <shortName evidence="1">CPO</shortName>
        <shortName evidence="1">Coprogen oxidase</shortName>
        <shortName evidence="1">Coproporphyrinogenase</shortName>
        <ecNumber evidence="1">1.3.3.3</ecNumber>
    </recommendedName>
</protein>
<accession>Q7VWE7</accession>
<organism>
    <name type="scientific">Bordetella pertussis (strain Tohama I / ATCC BAA-589 / NCTC 13251)</name>
    <dbReference type="NCBI Taxonomy" id="257313"/>
    <lineage>
        <taxon>Bacteria</taxon>
        <taxon>Pseudomonadati</taxon>
        <taxon>Pseudomonadota</taxon>
        <taxon>Betaproteobacteria</taxon>
        <taxon>Burkholderiales</taxon>
        <taxon>Alcaligenaceae</taxon>
        <taxon>Bordetella</taxon>
    </lineage>
</organism>
<evidence type="ECO:0000255" key="1">
    <source>
        <dbReference type="HAMAP-Rule" id="MF_00333"/>
    </source>
</evidence>
<feature type="chain" id="PRO_0000109885" description="Oxygen-dependent coproporphyrinogen-III oxidase">
    <location>
        <begin position="1"/>
        <end position="303"/>
    </location>
</feature>
<feature type="region of interest" description="Important for dimerization" evidence="1">
    <location>
        <begin position="244"/>
        <end position="279"/>
    </location>
</feature>
<feature type="active site" description="Proton donor" evidence="1">
    <location>
        <position position="107"/>
    </location>
</feature>
<feature type="binding site" evidence="1">
    <location>
        <position position="93"/>
    </location>
    <ligand>
        <name>substrate</name>
    </ligand>
</feature>
<feature type="binding site" evidence="1">
    <location>
        <position position="97"/>
    </location>
    <ligand>
        <name>a divalent metal cation</name>
        <dbReference type="ChEBI" id="CHEBI:60240"/>
    </ligand>
</feature>
<feature type="binding site" evidence="1">
    <location>
        <position position="107"/>
    </location>
    <ligand>
        <name>a divalent metal cation</name>
        <dbReference type="ChEBI" id="CHEBI:60240"/>
    </ligand>
</feature>
<feature type="binding site" evidence="1">
    <location>
        <begin position="109"/>
        <end position="111"/>
    </location>
    <ligand>
        <name>substrate</name>
    </ligand>
</feature>
<feature type="binding site" evidence="1">
    <location>
        <position position="149"/>
    </location>
    <ligand>
        <name>a divalent metal cation</name>
        <dbReference type="ChEBI" id="CHEBI:60240"/>
    </ligand>
</feature>
<feature type="binding site" evidence="1">
    <location>
        <position position="179"/>
    </location>
    <ligand>
        <name>a divalent metal cation</name>
        <dbReference type="ChEBI" id="CHEBI:60240"/>
    </ligand>
</feature>
<feature type="binding site" evidence="1">
    <location>
        <begin position="262"/>
        <end position="264"/>
    </location>
    <ligand>
        <name>substrate</name>
    </ligand>
</feature>
<feature type="site" description="Important for dimerization" evidence="1">
    <location>
        <position position="179"/>
    </location>
</feature>
<name>HEM6_BORPE</name>
<keyword id="KW-0963">Cytoplasm</keyword>
<keyword id="KW-0350">Heme biosynthesis</keyword>
<keyword id="KW-0479">Metal-binding</keyword>
<keyword id="KW-0560">Oxidoreductase</keyword>
<keyword id="KW-0627">Porphyrin biosynthesis</keyword>
<keyword id="KW-1185">Reference proteome</keyword>
<proteinExistence type="inferred from homology"/>
<comment type="function">
    <text evidence="1">Involved in the heme biosynthesis. Catalyzes the aerobic oxidative decarboxylation of propionate groups of rings A and B of coproporphyrinogen-III to yield the vinyl groups in protoporphyrinogen-IX.</text>
</comment>
<comment type="catalytic activity">
    <reaction evidence="1">
        <text>coproporphyrinogen III + O2 + 2 H(+) = protoporphyrinogen IX + 2 CO2 + 2 H2O</text>
        <dbReference type="Rhea" id="RHEA:18257"/>
        <dbReference type="ChEBI" id="CHEBI:15377"/>
        <dbReference type="ChEBI" id="CHEBI:15378"/>
        <dbReference type="ChEBI" id="CHEBI:15379"/>
        <dbReference type="ChEBI" id="CHEBI:16526"/>
        <dbReference type="ChEBI" id="CHEBI:57307"/>
        <dbReference type="ChEBI" id="CHEBI:57309"/>
        <dbReference type="EC" id="1.3.3.3"/>
    </reaction>
</comment>
<comment type="cofactor">
    <cofactor evidence="1">
        <name>a divalent metal cation</name>
        <dbReference type="ChEBI" id="CHEBI:60240"/>
    </cofactor>
</comment>
<comment type="pathway">
    <text evidence="1">Porphyrin-containing compound metabolism; protoporphyrin-IX biosynthesis; protoporphyrinogen-IX from coproporphyrinogen-III (O2 route): step 1/1.</text>
</comment>
<comment type="subunit">
    <text evidence="1">Homodimer.</text>
</comment>
<comment type="subcellular location">
    <subcellularLocation>
        <location evidence="1">Cytoplasm</location>
    </subcellularLocation>
</comment>
<comment type="similarity">
    <text evidence="1">Belongs to the aerobic coproporphyrinogen-III oxidase family.</text>
</comment>
<sequence>MTAVAIPAVRDYLTDLQGRIVAALEQAGGEAFRTDAWQRAEGGGGVSRLLEGGQLFERAGVLFSHVKGTRLPPSASAHRPELAGRGWEAMGVSMVLHPRNPYVPTTHMNVRMFVAAARPGHAESDVFWFGGGLDLTPYYPFEDDARHFHRACRDALDPHGADYYPRYKQWCDEYFFLKHRNETRGIGGIFFDDLNEPGFDASFALTCSVGDSFLPAYLPIVQARRDMPYGERERDFQAYRRGRYVEFNLVFDRGTLFGLQSGGRTESILLSMPPLAQWRYDWQPQAGTPEAALAEFLRPREWV</sequence>
<dbReference type="EC" id="1.3.3.3" evidence="1"/>
<dbReference type="EMBL" id="BX640418">
    <property type="protein sequence ID" value="CAE42583.1"/>
    <property type="molecule type" value="Genomic_DNA"/>
</dbReference>
<dbReference type="RefSeq" id="NP_880948.1">
    <property type="nucleotide sequence ID" value="NC_002929.2"/>
</dbReference>
<dbReference type="RefSeq" id="WP_010930863.1">
    <property type="nucleotide sequence ID" value="NZ_CP039022.1"/>
</dbReference>
<dbReference type="SMR" id="Q7VWE7"/>
<dbReference type="STRING" id="257313.BP2310"/>
<dbReference type="PaxDb" id="257313-BP2310"/>
<dbReference type="GeneID" id="69602207"/>
<dbReference type="KEGG" id="bpe:BP2310"/>
<dbReference type="PATRIC" id="fig|257313.5.peg.2490"/>
<dbReference type="eggNOG" id="COG0408">
    <property type="taxonomic scope" value="Bacteria"/>
</dbReference>
<dbReference type="HOGENOM" id="CLU_026169_0_1_4"/>
<dbReference type="UniPathway" id="UPA00251">
    <property type="reaction ID" value="UER00322"/>
</dbReference>
<dbReference type="Proteomes" id="UP000002676">
    <property type="component" value="Chromosome"/>
</dbReference>
<dbReference type="GO" id="GO:0005737">
    <property type="term" value="C:cytoplasm"/>
    <property type="evidence" value="ECO:0007669"/>
    <property type="project" value="UniProtKB-SubCell"/>
</dbReference>
<dbReference type="GO" id="GO:0004109">
    <property type="term" value="F:coproporphyrinogen oxidase activity"/>
    <property type="evidence" value="ECO:0007669"/>
    <property type="project" value="UniProtKB-UniRule"/>
</dbReference>
<dbReference type="GO" id="GO:0046872">
    <property type="term" value="F:metal ion binding"/>
    <property type="evidence" value="ECO:0007669"/>
    <property type="project" value="UniProtKB-KW"/>
</dbReference>
<dbReference type="GO" id="GO:0042803">
    <property type="term" value="F:protein homodimerization activity"/>
    <property type="evidence" value="ECO:0000250"/>
    <property type="project" value="UniProtKB"/>
</dbReference>
<dbReference type="GO" id="GO:0006782">
    <property type="term" value="P:protoporphyrinogen IX biosynthetic process"/>
    <property type="evidence" value="ECO:0007669"/>
    <property type="project" value="UniProtKB-UniRule"/>
</dbReference>
<dbReference type="FunFam" id="3.40.1500.10:FF:000001">
    <property type="entry name" value="Oxygen-dependent coproporphyrinogen-III oxidase"/>
    <property type="match status" value="1"/>
</dbReference>
<dbReference type="Gene3D" id="3.40.1500.10">
    <property type="entry name" value="Coproporphyrinogen III oxidase, aerobic"/>
    <property type="match status" value="1"/>
</dbReference>
<dbReference type="HAMAP" id="MF_00333">
    <property type="entry name" value="Coprogen_oxidas"/>
    <property type="match status" value="1"/>
</dbReference>
<dbReference type="InterPro" id="IPR001260">
    <property type="entry name" value="Coprogen_oxidase_aer"/>
</dbReference>
<dbReference type="InterPro" id="IPR036406">
    <property type="entry name" value="Coprogen_oxidase_aer_sf"/>
</dbReference>
<dbReference type="InterPro" id="IPR018375">
    <property type="entry name" value="Coprogen_oxidase_CS"/>
</dbReference>
<dbReference type="NCBIfam" id="NF003727">
    <property type="entry name" value="PRK05330.1"/>
    <property type="match status" value="1"/>
</dbReference>
<dbReference type="PANTHER" id="PTHR10755">
    <property type="entry name" value="COPROPORPHYRINOGEN III OXIDASE, MITOCHONDRIAL"/>
    <property type="match status" value="1"/>
</dbReference>
<dbReference type="PANTHER" id="PTHR10755:SF0">
    <property type="entry name" value="OXYGEN-DEPENDENT COPROPORPHYRINOGEN-III OXIDASE, MITOCHONDRIAL"/>
    <property type="match status" value="1"/>
</dbReference>
<dbReference type="Pfam" id="PF01218">
    <property type="entry name" value="Coprogen_oxidas"/>
    <property type="match status" value="1"/>
</dbReference>
<dbReference type="PIRSF" id="PIRSF000166">
    <property type="entry name" value="Coproporphyri_ox"/>
    <property type="match status" value="1"/>
</dbReference>
<dbReference type="PRINTS" id="PR00073">
    <property type="entry name" value="COPRGNOXDASE"/>
</dbReference>
<dbReference type="SUPFAM" id="SSF102886">
    <property type="entry name" value="Coproporphyrinogen III oxidase"/>
    <property type="match status" value="1"/>
</dbReference>
<dbReference type="PROSITE" id="PS01021">
    <property type="entry name" value="COPROGEN_OXIDASE"/>
    <property type="match status" value="1"/>
</dbReference>
<gene>
    <name evidence="1" type="primary">hemF</name>
    <name type="ordered locus">BP2310</name>
</gene>